<protein>
    <recommendedName>
        <fullName>Band 4.1-like protein 5</fullName>
    </recommendedName>
    <alternativeName>
        <fullName evidence="11">Erythrocyte membrane protein band 4.1-like 5</fullName>
    </alternativeName>
</protein>
<sequence>MLSFFRRTLGRRSMRKHAEKERLREAQRAATHIPAAGDSKSIITCRVSLLDGTDVSVDLPKKAKGQELFDQIMYHLDLIESDYFGLRFMDSAQVAHWLDGTKSIKKQVKIGSPYCLHLRVKFYSSEPNNLREELTRYLFVLQLKQDILSGKLDCPFDTAVQLAAYNLQAELGDYDLAEHSPELVSEFRFVPIQTEEMELAIFEKWKEYRGQTPAQAETNYLNKAKWLEMYGVDMHVVKARDGNDYSLGLTPTGVLVFEGDTKIGLFFWPKITRLDFKKNKLTLVVVEDDDQGKEQEHTFVFRLDHPKACKHLWKCAVEHHAFFRLRGPVQKSSHRSGFIRLGSRFRYSGKTEYQTTKTNKARRSTSFERRPSKRYSRRTLQMKACATKPEELSVHNNVSTQSNGSQQAWGMRSALPVSPSISSAPVPVEIENLPQSPGTDQHDRKCIPLNIDLLNSPDLLEATIGDVIGASDTMETSQALNDVNVATRLPGLGEPEVEYETLKDTSEKLKQLEMENSPLLSPRSNIDVNINSQEEVVKLTEKCLNNVIESPGLNVMRVPPDFKSNILKAQVEAVHKVTKEDSLLSHKNANVQDAATNSAVLNENNVPLPKESLETLMLITPADSGSVLKEATDELDALLASLTENLIDHTVAPQVSSTSMITPRWIVPQSGAMSNGLAGCEMLLTGKEGHGNKDGISLISPPAPFLVDAVTSSGPILAEEAVLKQKCLLTTEL</sequence>
<feature type="chain" id="PRO_0000219406" description="Band 4.1-like protein 5">
    <location>
        <begin position="1"/>
        <end position="733"/>
    </location>
</feature>
<feature type="domain" description="FERM" evidence="3">
    <location>
        <begin position="43"/>
        <end position="327"/>
    </location>
</feature>
<feature type="region of interest" description="Required for interaction with CRB1" evidence="6">
    <location>
        <begin position="29"/>
        <end position="119"/>
    </location>
</feature>
<feature type="modified residue" description="Phosphoserine" evidence="14">
    <location>
        <position position="39"/>
    </location>
</feature>
<feature type="modified residue" description="Phosphoserine" evidence="12">
    <location>
        <position position="436"/>
    </location>
</feature>
<feature type="modified residue" description="Phosphoserine" evidence="13">
    <location>
        <position position="517"/>
    </location>
</feature>
<feature type="splice variant" id="VSP_033034" description="In isoform 2." evidence="8 9">
    <original>CIPLNIDLLNSPDLLEATIGDVIGASDTMETSQALNDVNVATRLPGLGEPEVEYETLKDT</original>
    <variation>WLSAASDCCQRGGNQWNTRALPPPQTAHRNYTDFVHEHNVKNAGIRHDVHFPGHTAMTEI</variation>
    <location>
        <begin position="446"/>
        <end position="505"/>
    </location>
</feature>
<feature type="splice variant" id="VSP_033035" description="In isoform 2." evidence="8 9">
    <location>
        <begin position="506"/>
        <end position="733"/>
    </location>
</feature>
<feature type="splice variant" id="VSP_033036" description="In isoform 3." evidence="7">
    <original>PQ</original>
    <variation>P</variation>
    <location>
        <begin position="668"/>
        <end position="669"/>
    </location>
</feature>
<feature type="splice variant" id="VSP_033037" description="In isoform 4." evidence="8">
    <original>QSGAMSNGLAGCEMLLTGK</original>
    <variation>LWSHFGRRSCPEAEVFTDH</variation>
    <location>
        <begin position="669"/>
        <end position="687"/>
    </location>
</feature>
<feature type="splice variant" id="VSP_033038" description="In isoform 4." evidence="8">
    <location>
        <begin position="688"/>
        <end position="733"/>
    </location>
</feature>
<feature type="sequence variant" id="VAR_048357" description="In dbSNP:rs28930677.">
    <original>H</original>
    <variation>Y</variation>
    <location>
        <position position="334"/>
    </location>
</feature>
<feature type="sequence variant" id="VAR_042699" description="In dbSNP:rs1034489." evidence="4 5">
    <original>A</original>
    <variation>T</variation>
    <location>
        <position position="462"/>
    </location>
</feature>
<reference key="1">
    <citation type="journal article" date="2004" name="Nat. Genet.">
        <title>Complete sequencing and characterization of 21,243 full-length human cDNAs.</title>
        <authorList>
            <person name="Ota T."/>
            <person name="Suzuki Y."/>
            <person name="Nishikawa T."/>
            <person name="Otsuki T."/>
            <person name="Sugiyama T."/>
            <person name="Irie R."/>
            <person name="Wakamatsu A."/>
            <person name="Hayashi K."/>
            <person name="Sato H."/>
            <person name="Nagai K."/>
            <person name="Kimura K."/>
            <person name="Makita H."/>
            <person name="Sekine M."/>
            <person name="Obayashi M."/>
            <person name="Nishi T."/>
            <person name="Shibahara T."/>
            <person name="Tanaka T."/>
            <person name="Ishii S."/>
            <person name="Yamamoto J."/>
            <person name="Saito K."/>
            <person name="Kawai Y."/>
            <person name="Isono Y."/>
            <person name="Nakamura Y."/>
            <person name="Nagahari K."/>
            <person name="Murakami K."/>
            <person name="Yasuda T."/>
            <person name="Iwayanagi T."/>
            <person name="Wagatsuma M."/>
            <person name="Shiratori A."/>
            <person name="Sudo H."/>
            <person name="Hosoiri T."/>
            <person name="Kaku Y."/>
            <person name="Kodaira H."/>
            <person name="Kondo H."/>
            <person name="Sugawara M."/>
            <person name="Takahashi M."/>
            <person name="Kanda K."/>
            <person name="Yokoi T."/>
            <person name="Furuya T."/>
            <person name="Kikkawa E."/>
            <person name="Omura Y."/>
            <person name="Abe K."/>
            <person name="Kamihara K."/>
            <person name="Katsuta N."/>
            <person name="Sato K."/>
            <person name="Tanikawa M."/>
            <person name="Yamazaki M."/>
            <person name="Ninomiya K."/>
            <person name="Ishibashi T."/>
            <person name="Yamashita H."/>
            <person name="Murakawa K."/>
            <person name="Fujimori K."/>
            <person name="Tanai H."/>
            <person name="Kimata M."/>
            <person name="Watanabe M."/>
            <person name="Hiraoka S."/>
            <person name="Chiba Y."/>
            <person name="Ishida S."/>
            <person name="Ono Y."/>
            <person name="Takiguchi S."/>
            <person name="Watanabe S."/>
            <person name="Yosida M."/>
            <person name="Hotuta T."/>
            <person name="Kusano J."/>
            <person name="Kanehori K."/>
            <person name="Takahashi-Fujii A."/>
            <person name="Hara H."/>
            <person name="Tanase T.-O."/>
            <person name="Nomura Y."/>
            <person name="Togiya S."/>
            <person name="Komai F."/>
            <person name="Hara R."/>
            <person name="Takeuchi K."/>
            <person name="Arita M."/>
            <person name="Imose N."/>
            <person name="Musashino K."/>
            <person name="Yuuki H."/>
            <person name="Oshima A."/>
            <person name="Sasaki N."/>
            <person name="Aotsuka S."/>
            <person name="Yoshikawa Y."/>
            <person name="Matsunawa H."/>
            <person name="Ichihara T."/>
            <person name="Shiohata N."/>
            <person name="Sano S."/>
            <person name="Moriya S."/>
            <person name="Momiyama H."/>
            <person name="Satoh N."/>
            <person name="Takami S."/>
            <person name="Terashima Y."/>
            <person name="Suzuki O."/>
            <person name="Nakagawa S."/>
            <person name="Senoh A."/>
            <person name="Mizoguchi H."/>
            <person name="Goto Y."/>
            <person name="Shimizu F."/>
            <person name="Wakebe H."/>
            <person name="Hishigaki H."/>
            <person name="Watanabe T."/>
            <person name="Sugiyama A."/>
            <person name="Takemoto M."/>
            <person name="Kawakami B."/>
            <person name="Yamazaki M."/>
            <person name="Watanabe K."/>
            <person name="Kumagai A."/>
            <person name="Itakura S."/>
            <person name="Fukuzumi Y."/>
            <person name="Fujimori Y."/>
            <person name="Komiyama M."/>
            <person name="Tashiro H."/>
            <person name="Tanigami A."/>
            <person name="Fujiwara T."/>
            <person name="Ono T."/>
            <person name="Yamada K."/>
            <person name="Fujii Y."/>
            <person name="Ozaki K."/>
            <person name="Hirao M."/>
            <person name="Ohmori Y."/>
            <person name="Kawabata A."/>
            <person name="Hikiji T."/>
            <person name="Kobatake N."/>
            <person name="Inagaki H."/>
            <person name="Ikema Y."/>
            <person name="Okamoto S."/>
            <person name="Okitani R."/>
            <person name="Kawakami T."/>
            <person name="Noguchi S."/>
            <person name="Itoh T."/>
            <person name="Shigeta K."/>
            <person name="Senba T."/>
            <person name="Matsumura K."/>
            <person name="Nakajima Y."/>
            <person name="Mizuno T."/>
            <person name="Morinaga M."/>
            <person name="Sasaki M."/>
            <person name="Togashi T."/>
            <person name="Oyama M."/>
            <person name="Hata H."/>
            <person name="Watanabe M."/>
            <person name="Komatsu T."/>
            <person name="Mizushima-Sugano J."/>
            <person name="Satoh T."/>
            <person name="Shirai Y."/>
            <person name="Takahashi Y."/>
            <person name="Nakagawa K."/>
            <person name="Okumura K."/>
            <person name="Nagase T."/>
            <person name="Nomura N."/>
            <person name="Kikuchi H."/>
            <person name="Masuho Y."/>
            <person name="Yamashita R."/>
            <person name="Nakai K."/>
            <person name="Yada T."/>
            <person name="Nakamura Y."/>
            <person name="Ohara O."/>
            <person name="Isogai T."/>
            <person name="Sugano S."/>
        </authorList>
    </citation>
    <scope>NUCLEOTIDE SEQUENCE [LARGE SCALE MRNA] (ISOFORMS 2 AND 4)</scope>
    <scope>VARIANT THR-462</scope>
</reference>
<reference key="2">
    <citation type="submission" date="2005-07" db="EMBL/GenBank/DDBJ databases">
        <authorList>
            <person name="Mural R.J."/>
            <person name="Istrail S."/>
            <person name="Sutton G.G."/>
            <person name="Florea L."/>
            <person name="Halpern A.L."/>
            <person name="Mobarry C.M."/>
            <person name="Lippert R."/>
            <person name="Walenz B."/>
            <person name="Shatkay H."/>
            <person name="Dew I."/>
            <person name="Miller J.R."/>
            <person name="Flanigan M.J."/>
            <person name="Edwards N.J."/>
            <person name="Bolanos R."/>
            <person name="Fasulo D."/>
            <person name="Halldorsson B.V."/>
            <person name="Hannenhalli S."/>
            <person name="Turner R."/>
            <person name="Yooseph S."/>
            <person name="Lu F."/>
            <person name="Nusskern D.R."/>
            <person name="Shue B.C."/>
            <person name="Zheng X.H."/>
            <person name="Zhong F."/>
            <person name="Delcher A.L."/>
            <person name="Huson D.H."/>
            <person name="Kravitz S.A."/>
            <person name="Mouchard L."/>
            <person name="Reinert K."/>
            <person name="Remington K.A."/>
            <person name="Clark A.G."/>
            <person name="Waterman M.S."/>
            <person name="Eichler E.E."/>
            <person name="Adams M.D."/>
            <person name="Hunkapiller M.W."/>
            <person name="Myers E.W."/>
            <person name="Venter J.C."/>
        </authorList>
    </citation>
    <scope>NUCLEOTIDE SEQUENCE [LARGE SCALE GENOMIC DNA]</scope>
</reference>
<reference key="3">
    <citation type="journal article" date="2004" name="Genome Res.">
        <title>The status, quality, and expansion of the NIH full-length cDNA project: the Mammalian Gene Collection (MGC).</title>
        <authorList>
            <consortium name="The MGC Project Team"/>
        </authorList>
    </citation>
    <scope>NUCLEOTIDE SEQUENCE [LARGE SCALE MRNA] (ISOFORMS 1 AND 2)</scope>
    <source>
        <tissue>Retinoblastoma</tissue>
        <tissue>Testis</tissue>
    </source>
</reference>
<reference key="4">
    <citation type="journal article" date="2000" name="DNA Res.">
        <title>Prediction of the coding sequences of unidentified human genes. XVIII. The complete sequences of 100 new cDNA clones from brain which code for large proteins in vitro.</title>
        <authorList>
            <person name="Nagase T."/>
            <person name="Kikuno R."/>
            <person name="Nakayama M."/>
            <person name="Hirosawa M."/>
            <person name="Ohara O."/>
        </authorList>
    </citation>
    <scope>NUCLEOTIDE SEQUENCE [LARGE SCALE MRNA] OF 188-732 (ISOFORM 3)</scope>
    <scope>VARIANT THR-462</scope>
    <source>
        <tissue>Brain</tissue>
    </source>
</reference>
<reference key="5">
    <citation type="journal article" date="2007" name="Exp. Cell Res.">
        <title>FERM protein EPB41L5 is a novel member of the mammalian CRB-MPP5 polarity complex.</title>
        <authorList>
            <person name="Gosens I."/>
            <person name="Sessa A."/>
            <person name="den Hollander A.I."/>
            <person name="Letteboer S.J.F."/>
            <person name="Belloni V."/>
            <person name="Arends M.L."/>
            <person name="Le Bivic A."/>
            <person name="Cremers F.P.M."/>
            <person name="Broccoli V."/>
            <person name="Roepman R."/>
        </authorList>
    </citation>
    <scope>FUNCTION</scope>
    <scope>IDENTIFICATION IN A COMPLEX WITH CRB1 AND PALS1</scope>
    <scope>INTERACTION WITH PALS1; CRB1; CRB2 AND CRB3</scope>
</reference>
<reference key="6">
    <citation type="journal article" date="2008" name="Proc. Natl. Acad. Sci. U.S.A.">
        <title>A quantitative atlas of mitotic phosphorylation.</title>
        <authorList>
            <person name="Dephoure N."/>
            <person name="Zhou C."/>
            <person name="Villen J."/>
            <person name="Beausoleil S.A."/>
            <person name="Bakalarski C.E."/>
            <person name="Elledge S.J."/>
            <person name="Gygi S.P."/>
        </authorList>
    </citation>
    <scope>IDENTIFICATION BY MASS SPECTROMETRY [LARGE SCALE ANALYSIS]</scope>
    <source>
        <tissue>Cervix carcinoma</tissue>
    </source>
</reference>
<reference key="7">
    <citation type="journal article" date="2009" name="Sci. Signal.">
        <title>Quantitative phosphoproteomic analysis of T cell receptor signaling reveals system-wide modulation of protein-protein interactions.</title>
        <authorList>
            <person name="Mayya V."/>
            <person name="Lundgren D.H."/>
            <person name="Hwang S.-I."/>
            <person name="Rezaul K."/>
            <person name="Wu L."/>
            <person name="Eng J.K."/>
            <person name="Rodionov V."/>
            <person name="Han D.K."/>
        </authorList>
    </citation>
    <scope>PHOSPHORYLATION [LARGE SCALE ANALYSIS] AT SER-436</scope>
    <scope>IDENTIFICATION BY MASS SPECTROMETRY [LARGE SCALE ANALYSIS]</scope>
    <source>
        <tissue>Leukemic T-cell</tissue>
    </source>
</reference>
<reference key="8">
    <citation type="journal article" date="2011" name="Sci. Signal.">
        <title>System-wide temporal characterization of the proteome and phosphoproteome of human embryonic stem cell differentiation.</title>
        <authorList>
            <person name="Rigbolt K.T."/>
            <person name="Prokhorova T.A."/>
            <person name="Akimov V."/>
            <person name="Henningsen J."/>
            <person name="Johansen P.T."/>
            <person name="Kratchmarova I."/>
            <person name="Kassem M."/>
            <person name="Mann M."/>
            <person name="Olsen J.V."/>
            <person name="Blagoev B."/>
        </authorList>
    </citation>
    <scope>IDENTIFICATION BY MASS SPECTROMETRY [LARGE SCALE ANALYSIS]</scope>
</reference>
<reference key="9">
    <citation type="journal article" date="2013" name="J. Proteome Res.">
        <title>Toward a comprehensive characterization of a human cancer cell phosphoproteome.</title>
        <authorList>
            <person name="Zhou H."/>
            <person name="Di Palma S."/>
            <person name="Preisinger C."/>
            <person name="Peng M."/>
            <person name="Polat A.N."/>
            <person name="Heck A.J."/>
            <person name="Mohammed S."/>
        </authorList>
    </citation>
    <scope>PHOSPHORYLATION [LARGE SCALE ANALYSIS] AT SER-517</scope>
    <scope>IDENTIFICATION BY MASS SPECTROMETRY [LARGE SCALE ANALYSIS]</scope>
    <source>
        <tissue>Erythroleukemia</tissue>
    </source>
</reference>
<reference key="10">
    <citation type="journal article" date="2014" name="J. Proteomics">
        <title>An enzyme assisted RP-RPLC approach for in-depth analysis of human liver phosphoproteome.</title>
        <authorList>
            <person name="Bian Y."/>
            <person name="Song C."/>
            <person name="Cheng K."/>
            <person name="Dong M."/>
            <person name="Wang F."/>
            <person name="Huang J."/>
            <person name="Sun D."/>
            <person name="Wang L."/>
            <person name="Ye M."/>
            <person name="Zou H."/>
        </authorList>
    </citation>
    <scope>PHOSPHORYLATION [LARGE SCALE ANALYSIS] AT SER-39</scope>
    <scope>IDENTIFICATION BY MASS SPECTROMETRY [LARGE SCALE ANALYSIS]</scope>
    <source>
        <tissue>Liver</tissue>
    </source>
</reference>
<evidence type="ECO:0000250" key="1">
    <source>
        <dbReference type="UniProtKB" id="Q5FVG2"/>
    </source>
</evidence>
<evidence type="ECO:0000250" key="2">
    <source>
        <dbReference type="UniProtKB" id="Q8BGS1"/>
    </source>
</evidence>
<evidence type="ECO:0000255" key="3">
    <source>
        <dbReference type="PROSITE-ProRule" id="PRU00084"/>
    </source>
</evidence>
<evidence type="ECO:0000269" key="4">
    <source>
    </source>
</evidence>
<evidence type="ECO:0000269" key="5">
    <source>
    </source>
</evidence>
<evidence type="ECO:0000269" key="6">
    <source>
    </source>
</evidence>
<evidence type="ECO:0000303" key="7">
    <source>
    </source>
</evidence>
<evidence type="ECO:0000303" key="8">
    <source>
    </source>
</evidence>
<evidence type="ECO:0000303" key="9">
    <source>
    </source>
</evidence>
<evidence type="ECO:0000305" key="10"/>
<evidence type="ECO:0000312" key="11">
    <source>
        <dbReference type="HGNC" id="HGNC:19819"/>
    </source>
</evidence>
<evidence type="ECO:0007744" key="12">
    <source>
    </source>
</evidence>
<evidence type="ECO:0007744" key="13">
    <source>
    </source>
</evidence>
<evidence type="ECO:0007744" key="14">
    <source>
    </source>
</evidence>
<gene>
    <name type="primary">EPB41L5</name>
    <name type="synonym">KIAA1548</name>
</gene>
<keyword id="KW-0025">Alternative splicing</keyword>
<keyword id="KW-0965">Cell junction</keyword>
<keyword id="KW-1003">Cell membrane</keyword>
<keyword id="KW-0963">Cytoplasm</keyword>
<keyword id="KW-0472">Membrane</keyword>
<keyword id="KW-0597">Phosphoprotein</keyword>
<keyword id="KW-1267">Proteomics identification</keyword>
<keyword id="KW-1185">Reference proteome</keyword>
<proteinExistence type="evidence at protein level"/>
<comment type="function">
    <text evidence="6">Plays a role in the formation and organization of tight junctions during the establishment of polarity in epithelial cells.</text>
</comment>
<comment type="subunit">
    <text evidence="6">Component of a complex composed of PALS1, CRB1 and EPB41L5 (PubMed:17920587). Within the complex, interacts (via FERM domain) with PALS1 (via HOOK domain) and with CRB1 (via intracellular domain) (PubMed:17920587). Interacts with CRB2 (via intracellular domain) (PubMed:17920587). Interacts with CRB3 (via intracellular domain) (PubMed:17920587).</text>
</comment>
<comment type="interaction">
    <interactant intactId="EBI-1047162">
        <id>Q9HCM4</id>
    </interactant>
    <interactant intactId="EBI-1048648">
        <id>P82279</id>
        <label>CRB1</label>
    </interactant>
    <organismsDiffer>false</organismsDiffer>
    <experiments>4</experiments>
</comment>
<comment type="interaction">
    <interactant intactId="EBI-1047162">
        <id>Q9HCM4</id>
    </interactant>
    <interactant intactId="EBI-9844372">
        <id>Q9BUF7</id>
        <label>CRB3</label>
    </interactant>
    <organismsDiffer>false</organismsDiffer>
    <experiments>3</experiments>
</comment>
<comment type="interaction">
    <interactant intactId="EBI-1047162">
        <id>Q9HCM4</id>
    </interactant>
    <interactant intactId="EBI-2513978">
        <id>Q8N3R9</id>
        <label>PALS1</label>
    </interactant>
    <organismsDiffer>false</organismsDiffer>
    <experiments>4</experiments>
</comment>
<comment type="subcellular location">
    <subcellularLocation>
        <location evidence="2">Cytoplasm</location>
    </subcellularLocation>
    <subcellularLocation>
        <location evidence="2">Cell junction</location>
        <location evidence="2">Adherens junction</location>
    </subcellularLocation>
    <subcellularLocation>
        <location evidence="2">Cell membrane</location>
        <topology evidence="10">Peripheral membrane protein</topology>
    </subcellularLocation>
    <subcellularLocation>
        <location evidence="1">Photoreceptor inner segment</location>
    </subcellularLocation>
</comment>
<comment type="alternative products">
    <event type="alternative splicing"/>
    <isoform>
        <id>Q9HCM4-1</id>
        <name>1</name>
        <sequence type="displayed"/>
    </isoform>
    <isoform>
        <id>Q9HCM4-2</id>
        <name>2</name>
        <sequence type="described" ref="VSP_033034 VSP_033035"/>
    </isoform>
    <isoform>
        <id>Q9HCM4-3</id>
        <name>3</name>
        <sequence type="described" ref="VSP_033036"/>
    </isoform>
    <isoform>
        <id>Q9HCM4-4</id>
        <name>4</name>
        <sequence type="described" ref="VSP_033037 VSP_033038"/>
    </isoform>
</comment>
<accession>Q9HCM4</accession>
<accession>Q7Z5S1</accession>
<accession>Q8IZ12</accession>
<accession>Q9H975</accession>
<name>E41L5_HUMAN</name>
<organism>
    <name type="scientific">Homo sapiens</name>
    <name type="common">Human</name>
    <dbReference type="NCBI Taxonomy" id="9606"/>
    <lineage>
        <taxon>Eukaryota</taxon>
        <taxon>Metazoa</taxon>
        <taxon>Chordata</taxon>
        <taxon>Craniata</taxon>
        <taxon>Vertebrata</taxon>
        <taxon>Euteleostomi</taxon>
        <taxon>Mammalia</taxon>
        <taxon>Eutheria</taxon>
        <taxon>Euarchontoglires</taxon>
        <taxon>Primates</taxon>
        <taxon>Haplorrhini</taxon>
        <taxon>Catarrhini</taxon>
        <taxon>Hominidae</taxon>
        <taxon>Homo</taxon>
    </lineage>
</organism>
<dbReference type="EMBL" id="AK023019">
    <property type="protein sequence ID" value="BAB14360.1"/>
    <property type="molecule type" value="mRNA"/>
</dbReference>
<dbReference type="EMBL" id="AK290895">
    <property type="protein sequence ID" value="BAF83584.1"/>
    <property type="molecule type" value="mRNA"/>
</dbReference>
<dbReference type="EMBL" id="CH471103">
    <property type="protein sequence ID" value="EAW95234.1"/>
    <property type="molecule type" value="Genomic_DNA"/>
</dbReference>
<dbReference type="EMBL" id="BC032822">
    <property type="protein sequence ID" value="AAH32822.1"/>
    <property type="molecule type" value="mRNA"/>
</dbReference>
<dbReference type="EMBL" id="BC054508">
    <property type="protein sequence ID" value="AAH54508.1"/>
    <property type="molecule type" value="mRNA"/>
</dbReference>
<dbReference type="EMBL" id="AB046768">
    <property type="protein sequence ID" value="BAB13374.1"/>
    <property type="molecule type" value="mRNA"/>
</dbReference>
<dbReference type="CCDS" id="CCDS2130.1">
    <molecule id="Q9HCM4-1"/>
</dbReference>
<dbReference type="CCDS" id="CCDS54392.1">
    <molecule id="Q9HCM4-2"/>
</dbReference>
<dbReference type="CCDS" id="CCDS54393.1">
    <molecule id="Q9HCM4-4"/>
</dbReference>
<dbReference type="CCDS" id="CCDS82506.1">
    <molecule id="Q9HCM4-3"/>
</dbReference>
<dbReference type="RefSeq" id="NP_001171866.1">
    <molecule id="Q9HCM4-4"/>
    <property type="nucleotide sequence ID" value="NM_001184937.2"/>
</dbReference>
<dbReference type="RefSeq" id="NP_001171867.1">
    <molecule id="Q9HCM4-2"/>
    <property type="nucleotide sequence ID" value="NM_001184938.4"/>
</dbReference>
<dbReference type="RefSeq" id="NP_001171868.1">
    <molecule id="Q9HCM4-2"/>
    <property type="nucleotide sequence ID" value="NM_001184939.3"/>
</dbReference>
<dbReference type="RefSeq" id="NP_001317239.1">
    <molecule id="Q9HCM4-3"/>
    <property type="nucleotide sequence ID" value="NM_001330310.2"/>
</dbReference>
<dbReference type="RefSeq" id="NP_065960.2">
    <molecule id="Q9HCM4-1"/>
    <property type="nucleotide sequence ID" value="NM_020909.3"/>
</dbReference>
<dbReference type="RefSeq" id="XP_047301166.1">
    <molecule id="Q9HCM4-1"/>
    <property type="nucleotide sequence ID" value="XM_047445210.1"/>
</dbReference>
<dbReference type="SMR" id="Q9HCM4"/>
<dbReference type="BioGRID" id="121701">
    <property type="interactions" value="378"/>
</dbReference>
<dbReference type="FunCoup" id="Q9HCM4">
    <property type="interactions" value="1848"/>
</dbReference>
<dbReference type="IntAct" id="Q9HCM4">
    <property type="interactions" value="220"/>
</dbReference>
<dbReference type="MINT" id="Q9HCM4"/>
<dbReference type="STRING" id="9606.ENSP00000263713"/>
<dbReference type="iPTMnet" id="Q9HCM4"/>
<dbReference type="PhosphoSitePlus" id="Q9HCM4"/>
<dbReference type="SwissPalm" id="Q9HCM4"/>
<dbReference type="BioMuta" id="EPB41L5"/>
<dbReference type="DMDM" id="187608883"/>
<dbReference type="jPOST" id="Q9HCM4"/>
<dbReference type="MassIVE" id="Q9HCM4"/>
<dbReference type="PaxDb" id="9606-ENSP00000263713"/>
<dbReference type="PeptideAtlas" id="Q9HCM4"/>
<dbReference type="ProteomicsDB" id="81763">
    <molecule id="Q9HCM4-1"/>
</dbReference>
<dbReference type="ProteomicsDB" id="81764">
    <molecule id="Q9HCM4-2"/>
</dbReference>
<dbReference type="ProteomicsDB" id="81765">
    <molecule id="Q9HCM4-3"/>
</dbReference>
<dbReference type="ProteomicsDB" id="81766">
    <molecule id="Q9HCM4-4"/>
</dbReference>
<dbReference type="Pumba" id="Q9HCM4"/>
<dbReference type="Antibodypedia" id="33383">
    <property type="antibodies" value="124 antibodies from 26 providers"/>
</dbReference>
<dbReference type="DNASU" id="57669"/>
<dbReference type="Ensembl" id="ENST00000263713.10">
    <molecule id="Q9HCM4-1"/>
    <property type="protein sequence ID" value="ENSP00000263713.5"/>
    <property type="gene ID" value="ENSG00000115109.14"/>
</dbReference>
<dbReference type="Ensembl" id="ENST00000331393.8">
    <molecule id="Q9HCM4-2"/>
    <property type="protein sequence ID" value="ENSP00000329687.4"/>
    <property type="gene ID" value="ENSG00000115109.14"/>
</dbReference>
<dbReference type="Ensembl" id="ENST00000443124.5">
    <molecule id="Q9HCM4-2"/>
    <property type="protein sequence ID" value="ENSP00000393722.1"/>
    <property type="gene ID" value="ENSG00000115109.14"/>
</dbReference>
<dbReference type="Ensembl" id="ENST00000443902.6">
    <molecule id="Q9HCM4-4"/>
    <property type="protein sequence ID" value="ENSP00000393856.2"/>
    <property type="gene ID" value="ENSG00000115109.14"/>
</dbReference>
<dbReference type="Ensembl" id="ENST00000452780.1">
    <molecule id="Q9HCM4-3"/>
    <property type="protein sequence ID" value="ENSP00000390439.1"/>
    <property type="gene ID" value="ENSG00000115109.14"/>
</dbReference>
<dbReference type="GeneID" id="57669"/>
<dbReference type="KEGG" id="hsa:57669"/>
<dbReference type="MANE-Select" id="ENST00000263713.10">
    <property type="protein sequence ID" value="ENSP00000263713.5"/>
    <property type="RefSeq nucleotide sequence ID" value="NM_020909.4"/>
    <property type="RefSeq protein sequence ID" value="NP_065960.2"/>
</dbReference>
<dbReference type="UCSC" id="uc002tmg.4">
    <molecule id="Q9HCM4-1"/>
    <property type="organism name" value="human"/>
</dbReference>
<dbReference type="AGR" id="HGNC:19819"/>
<dbReference type="CTD" id="57669"/>
<dbReference type="DisGeNET" id="57669"/>
<dbReference type="GeneCards" id="EPB41L5"/>
<dbReference type="HGNC" id="HGNC:19819">
    <property type="gene designation" value="EPB41L5"/>
</dbReference>
<dbReference type="HPA" id="ENSG00000115109">
    <property type="expression patterns" value="Low tissue specificity"/>
</dbReference>
<dbReference type="MIM" id="611730">
    <property type="type" value="gene"/>
</dbReference>
<dbReference type="neXtProt" id="NX_Q9HCM4"/>
<dbReference type="OpenTargets" id="ENSG00000115109"/>
<dbReference type="PharmGKB" id="PA134862834"/>
<dbReference type="VEuPathDB" id="HostDB:ENSG00000115109"/>
<dbReference type="eggNOG" id="KOG3530">
    <property type="taxonomic scope" value="Eukaryota"/>
</dbReference>
<dbReference type="GeneTree" id="ENSGT00940000156332"/>
<dbReference type="HOGENOM" id="CLU_003623_5_1_1"/>
<dbReference type="InParanoid" id="Q9HCM4"/>
<dbReference type="OMA" id="DCCQHGG"/>
<dbReference type="OrthoDB" id="6235974at2759"/>
<dbReference type="PAN-GO" id="Q9HCM4">
    <property type="GO annotations" value="2 GO annotations based on evolutionary models"/>
</dbReference>
<dbReference type="PhylomeDB" id="Q9HCM4"/>
<dbReference type="TreeFam" id="TF319780"/>
<dbReference type="PathwayCommons" id="Q9HCM4"/>
<dbReference type="Reactome" id="R-HSA-6794361">
    <property type="pathway name" value="Neurexins and neuroligins"/>
</dbReference>
<dbReference type="SignaLink" id="Q9HCM4"/>
<dbReference type="BioGRID-ORCS" id="57669">
    <property type="hits" value="18 hits in 1160 CRISPR screens"/>
</dbReference>
<dbReference type="ChiTaRS" id="EPB41L5">
    <property type="organism name" value="human"/>
</dbReference>
<dbReference type="GeneWiki" id="EPB41L5"/>
<dbReference type="GenomeRNAi" id="57669"/>
<dbReference type="Pharos" id="Q9HCM4">
    <property type="development level" value="Tbio"/>
</dbReference>
<dbReference type="PRO" id="PR:Q9HCM4"/>
<dbReference type="Proteomes" id="UP000005640">
    <property type="component" value="Chromosome 2"/>
</dbReference>
<dbReference type="RNAct" id="Q9HCM4">
    <property type="molecule type" value="protein"/>
</dbReference>
<dbReference type="Bgee" id="ENSG00000115109">
    <property type="expression patterns" value="Expressed in oocyte and 166 other cell types or tissues"/>
</dbReference>
<dbReference type="GO" id="GO:0005912">
    <property type="term" value="C:adherens junction"/>
    <property type="evidence" value="ECO:0007669"/>
    <property type="project" value="UniProtKB-SubCell"/>
</dbReference>
<dbReference type="GO" id="GO:0005856">
    <property type="term" value="C:cytoskeleton"/>
    <property type="evidence" value="ECO:0000318"/>
    <property type="project" value="GO_Central"/>
</dbReference>
<dbReference type="GO" id="GO:0005829">
    <property type="term" value="C:cytosol"/>
    <property type="evidence" value="ECO:0000314"/>
    <property type="project" value="HPA"/>
</dbReference>
<dbReference type="GO" id="GO:0005925">
    <property type="term" value="C:focal adhesion"/>
    <property type="evidence" value="ECO:0007669"/>
    <property type="project" value="Ensembl"/>
</dbReference>
<dbReference type="GO" id="GO:0005654">
    <property type="term" value="C:nucleoplasm"/>
    <property type="evidence" value="ECO:0000314"/>
    <property type="project" value="HPA"/>
</dbReference>
<dbReference type="GO" id="GO:0001917">
    <property type="term" value="C:photoreceptor inner segment"/>
    <property type="evidence" value="ECO:0007669"/>
    <property type="project" value="UniProtKB-SubCell"/>
</dbReference>
<dbReference type="GO" id="GO:0005886">
    <property type="term" value="C:plasma membrane"/>
    <property type="evidence" value="ECO:0000314"/>
    <property type="project" value="HPA"/>
</dbReference>
<dbReference type="GO" id="GO:0032587">
    <property type="term" value="C:ruffle membrane"/>
    <property type="evidence" value="ECO:0007669"/>
    <property type="project" value="Ensembl"/>
</dbReference>
<dbReference type="GO" id="GO:0008092">
    <property type="term" value="F:cytoskeletal protein binding"/>
    <property type="evidence" value="ECO:0007669"/>
    <property type="project" value="InterPro"/>
</dbReference>
<dbReference type="GO" id="GO:0019904">
    <property type="term" value="F:protein domain specific binding"/>
    <property type="evidence" value="ECO:0007669"/>
    <property type="project" value="Ensembl"/>
</dbReference>
<dbReference type="GO" id="GO:0031032">
    <property type="term" value="P:actomyosin structure organization"/>
    <property type="evidence" value="ECO:0000318"/>
    <property type="project" value="GO_Central"/>
</dbReference>
<dbReference type="GO" id="GO:0003383">
    <property type="term" value="P:apical constriction"/>
    <property type="evidence" value="ECO:0007669"/>
    <property type="project" value="Ensembl"/>
</dbReference>
<dbReference type="GO" id="GO:0048319">
    <property type="term" value="P:axial mesoderm morphogenesis"/>
    <property type="evidence" value="ECO:0007669"/>
    <property type="project" value="Ensembl"/>
</dbReference>
<dbReference type="GO" id="GO:0071560">
    <property type="term" value="P:cellular response to transforming growth factor beta stimulus"/>
    <property type="evidence" value="ECO:0007669"/>
    <property type="project" value="Ensembl"/>
</dbReference>
<dbReference type="GO" id="GO:0007398">
    <property type="term" value="P:ectoderm development"/>
    <property type="evidence" value="ECO:0007669"/>
    <property type="project" value="Ensembl"/>
</dbReference>
<dbReference type="GO" id="GO:0048617">
    <property type="term" value="P:embryonic foregut morphogenesis"/>
    <property type="evidence" value="ECO:0007669"/>
    <property type="project" value="Ensembl"/>
</dbReference>
<dbReference type="GO" id="GO:0007492">
    <property type="term" value="P:endoderm development"/>
    <property type="evidence" value="ECO:0007669"/>
    <property type="project" value="Ensembl"/>
</dbReference>
<dbReference type="GO" id="GO:0001837">
    <property type="term" value="P:epithelial to mesenchymal transition"/>
    <property type="evidence" value="ECO:0007669"/>
    <property type="project" value="Ensembl"/>
</dbReference>
<dbReference type="GO" id="GO:0001701">
    <property type="term" value="P:in utero embryonic development"/>
    <property type="evidence" value="ECO:0007669"/>
    <property type="project" value="Ensembl"/>
</dbReference>
<dbReference type="GO" id="GO:0070986">
    <property type="term" value="P:left/right axis specification"/>
    <property type="evidence" value="ECO:0007669"/>
    <property type="project" value="Ensembl"/>
</dbReference>
<dbReference type="GO" id="GO:0007509">
    <property type="term" value="P:mesoderm migration involved in gastrulation"/>
    <property type="evidence" value="ECO:0007669"/>
    <property type="project" value="Ensembl"/>
</dbReference>
<dbReference type="GO" id="GO:0022408">
    <property type="term" value="P:negative regulation of cell-cell adhesion"/>
    <property type="evidence" value="ECO:0007669"/>
    <property type="project" value="Ensembl"/>
</dbReference>
<dbReference type="GO" id="GO:0001839">
    <property type="term" value="P:neural plate morphogenesis"/>
    <property type="evidence" value="ECO:0007669"/>
    <property type="project" value="Ensembl"/>
</dbReference>
<dbReference type="GO" id="GO:0048339">
    <property type="term" value="P:paraxial mesoderm development"/>
    <property type="evidence" value="ECO:0007669"/>
    <property type="project" value="Ensembl"/>
</dbReference>
<dbReference type="GO" id="GO:0010634">
    <property type="term" value="P:positive regulation of epithelial cell migration"/>
    <property type="evidence" value="ECO:0007669"/>
    <property type="project" value="Ensembl"/>
</dbReference>
<dbReference type="GO" id="GO:0051894">
    <property type="term" value="P:positive regulation of focal adhesion assembly"/>
    <property type="evidence" value="ECO:0007669"/>
    <property type="project" value="Ensembl"/>
</dbReference>
<dbReference type="GO" id="GO:0010608">
    <property type="term" value="P:post-transcriptional regulation of gene expression"/>
    <property type="evidence" value="ECO:0007669"/>
    <property type="project" value="Ensembl"/>
</dbReference>
<dbReference type="GO" id="GO:0070201">
    <property type="term" value="P:regulation of establishment of protein localization"/>
    <property type="evidence" value="ECO:0007669"/>
    <property type="project" value="Ensembl"/>
</dbReference>
<dbReference type="GO" id="GO:0032525">
    <property type="term" value="P:somite rostral/caudal axis specification"/>
    <property type="evidence" value="ECO:0007669"/>
    <property type="project" value="Ensembl"/>
</dbReference>
<dbReference type="GO" id="GO:0006931">
    <property type="term" value="P:substrate-dependent cell migration, cell attachment to substrate"/>
    <property type="evidence" value="ECO:0007669"/>
    <property type="project" value="Ensembl"/>
</dbReference>
<dbReference type="GO" id="GO:0009826">
    <property type="term" value="P:unidimensional cell growth"/>
    <property type="evidence" value="ECO:0007669"/>
    <property type="project" value="Ensembl"/>
</dbReference>
<dbReference type="CDD" id="cd14473">
    <property type="entry name" value="FERM_B-lobe"/>
    <property type="match status" value="1"/>
</dbReference>
<dbReference type="CDD" id="cd13186">
    <property type="entry name" value="FERM_C_NBL4_NBL5"/>
    <property type="match status" value="1"/>
</dbReference>
<dbReference type="CDD" id="cd17205">
    <property type="entry name" value="FERM_F1_EPB41L5"/>
    <property type="match status" value="1"/>
</dbReference>
<dbReference type="FunFam" id="2.30.29.30:FF:000002">
    <property type="entry name" value="Band 4.1-like protein 5 isoform 1"/>
    <property type="match status" value="1"/>
</dbReference>
<dbReference type="FunFam" id="3.10.20.90:FF:000024">
    <property type="entry name" value="Erythrocyte membrane protein band 4.1-like 5"/>
    <property type="match status" value="1"/>
</dbReference>
<dbReference type="FunFam" id="1.20.80.10:FF:000003">
    <property type="entry name" value="Tyrosine-protein phosphatase non-receptor type 4"/>
    <property type="match status" value="1"/>
</dbReference>
<dbReference type="Gene3D" id="1.20.80.10">
    <property type="match status" value="1"/>
</dbReference>
<dbReference type="Gene3D" id="3.10.20.90">
    <property type="entry name" value="Phosphatidylinositol 3-kinase Catalytic Subunit, Chain A, domain 1"/>
    <property type="match status" value="1"/>
</dbReference>
<dbReference type="Gene3D" id="2.30.29.30">
    <property type="entry name" value="Pleckstrin-homology domain (PH domain)/Phosphotyrosine-binding domain (PTB)"/>
    <property type="match status" value="1"/>
</dbReference>
<dbReference type="InterPro" id="IPR019749">
    <property type="entry name" value="Band_41_domain"/>
</dbReference>
<dbReference type="InterPro" id="IPR000798">
    <property type="entry name" value="Ez/rad/moesin-like"/>
</dbReference>
<dbReference type="InterPro" id="IPR014847">
    <property type="entry name" value="FA"/>
</dbReference>
<dbReference type="InterPro" id="IPR014352">
    <property type="entry name" value="FERM/acyl-CoA-bd_prot_sf"/>
</dbReference>
<dbReference type="InterPro" id="IPR035963">
    <property type="entry name" value="FERM_2"/>
</dbReference>
<dbReference type="InterPro" id="IPR019748">
    <property type="entry name" value="FERM_central"/>
</dbReference>
<dbReference type="InterPro" id="IPR019747">
    <property type="entry name" value="FERM_CS"/>
</dbReference>
<dbReference type="InterPro" id="IPR000299">
    <property type="entry name" value="FERM_domain"/>
</dbReference>
<dbReference type="InterPro" id="IPR018979">
    <property type="entry name" value="FERM_N"/>
</dbReference>
<dbReference type="InterPro" id="IPR018980">
    <property type="entry name" value="FERM_PH-like_C"/>
</dbReference>
<dbReference type="InterPro" id="IPR011993">
    <property type="entry name" value="PH-like_dom_sf"/>
</dbReference>
<dbReference type="InterPro" id="IPR029071">
    <property type="entry name" value="Ubiquitin-like_domsf"/>
</dbReference>
<dbReference type="PANTHER" id="PTHR23280">
    <property type="entry name" value="4.1 G PROTEIN"/>
    <property type="match status" value="1"/>
</dbReference>
<dbReference type="PANTHER" id="PTHR23280:SF15">
    <property type="entry name" value="BAND 4.1-LIKE PROTEIN 5"/>
    <property type="match status" value="1"/>
</dbReference>
<dbReference type="Pfam" id="PF08736">
    <property type="entry name" value="FA"/>
    <property type="match status" value="1"/>
</dbReference>
<dbReference type="Pfam" id="PF09380">
    <property type="entry name" value="FERM_C"/>
    <property type="match status" value="1"/>
</dbReference>
<dbReference type="Pfam" id="PF00373">
    <property type="entry name" value="FERM_M"/>
    <property type="match status" value="1"/>
</dbReference>
<dbReference type="Pfam" id="PF09379">
    <property type="entry name" value="FERM_N"/>
    <property type="match status" value="1"/>
</dbReference>
<dbReference type="PRINTS" id="PR00935">
    <property type="entry name" value="BAND41"/>
</dbReference>
<dbReference type="PRINTS" id="PR00661">
    <property type="entry name" value="ERMFAMILY"/>
</dbReference>
<dbReference type="SMART" id="SM00295">
    <property type="entry name" value="B41"/>
    <property type="match status" value="1"/>
</dbReference>
<dbReference type="SMART" id="SM01195">
    <property type="entry name" value="FA"/>
    <property type="match status" value="1"/>
</dbReference>
<dbReference type="SMART" id="SM01196">
    <property type="entry name" value="FERM_C"/>
    <property type="match status" value="1"/>
</dbReference>
<dbReference type="SUPFAM" id="SSF50729">
    <property type="entry name" value="PH domain-like"/>
    <property type="match status" value="1"/>
</dbReference>
<dbReference type="SUPFAM" id="SSF47031">
    <property type="entry name" value="Second domain of FERM"/>
    <property type="match status" value="1"/>
</dbReference>
<dbReference type="SUPFAM" id="SSF54236">
    <property type="entry name" value="Ubiquitin-like"/>
    <property type="match status" value="1"/>
</dbReference>
<dbReference type="PROSITE" id="PS00660">
    <property type="entry name" value="FERM_1"/>
    <property type="match status" value="1"/>
</dbReference>
<dbReference type="PROSITE" id="PS00661">
    <property type="entry name" value="FERM_2"/>
    <property type="match status" value="1"/>
</dbReference>
<dbReference type="PROSITE" id="PS50057">
    <property type="entry name" value="FERM_3"/>
    <property type="match status" value="1"/>
</dbReference>